<evidence type="ECO:0000255" key="1">
    <source>
        <dbReference type="HAMAP-Rule" id="MF_00558"/>
    </source>
</evidence>
<reference key="1">
    <citation type="journal article" date="2009" name="Stand. Genomic Sci.">
        <title>Complete genome sequence of Beutenbergia cavernae type strain (HKI 0122).</title>
        <authorList>
            <person name="Land M."/>
            <person name="Pukall R."/>
            <person name="Abt B."/>
            <person name="Goker M."/>
            <person name="Rohde M."/>
            <person name="Glavina Del Rio T."/>
            <person name="Tice H."/>
            <person name="Copeland A."/>
            <person name="Cheng J.F."/>
            <person name="Lucas S."/>
            <person name="Chen F."/>
            <person name="Nolan M."/>
            <person name="Bruce D."/>
            <person name="Goodwin L."/>
            <person name="Pitluck S."/>
            <person name="Ivanova N."/>
            <person name="Mavromatis K."/>
            <person name="Ovchinnikova G."/>
            <person name="Pati A."/>
            <person name="Chen A."/>
            <person name="Palaniappan K."/>
            <person name="Hauser L."/>
            <person name="Chang Y.J."/>
            <person name="Jefferies C.C."/>
            <person name="Saunders E."/>
            <person name="Brettin T."/>
            <person name="Detter J.C."/>
            <person name="Han C."/>
            <person name="Chain P."/>
            <person name="Bristow J."/>
            <person name="Eisen J.A."/>
            <person name="Markowitz V."/>
            <person name="Hugenholtz P."/>
            <person name="Kyrpides N.C."/>
            <person name="Klenk H.P."/>
            <person name="Lapidus A."/>
        </authorList>
    </citation>
    <scope>NUCLEOTIDE SEQUENCE [LARGE SCALE GENOMIC DNA]</scope>
    <source>
        <strain>ATCC BAA-8 / DSM 12333 / CCUG 43141 / JCM 11478 / NBRC 16432 / NCIMB 13614 / HKI 0122</strain>
    </source>
</reference>
<sequence>MDLFEYQARDVFEKHGVPVLGGIVATTVDEARAAAETLTSGAGSVVVVKAQVKTGGRGKAGGVKLARSPEEAAEAAEQILGMDIKGHTVHRVMIAEGASIAEEYYFSVLLDRANRSYLAMASVEGGVEIEQLAVERPEALARVAVDPLVGIDAAKAAEIVAAAGFADDVAGAVADVIQKLWTVYDAEDATLVEVNPLVRTTDGRVIALDGKVTLDDNAEFRHPEHAELEDAASADPLEAKAKAHDLNYVKLDGEVGIIGNGAGLVMSTLDVVAYAGERHGGVKPANFLDIGGGASAAVMAAGLDVILGDPQVKSVFVNVFGGITACDEVARGIVQALEILGDKENKPLVVRLDGNAVEEGRAILAEANHPLVTLAETMDGGADAAAAAAHSAVTA</sequence>
<dbReference type="EC" id="6.2.1.5" evidence="1"/>
<dbReference type="EMBL" id="CP001618">
    <property type="protein sequence ID" value="ACQ81262.1"/>
    <property type="molecule type" value="Genomic_DNA"/>
</dbReference>
<dbReference type="RefSeq" id="WP_015883502.1">
    <property type="nucleotide sequence ID" value="NC_012669.1"/>
</dbReference>
<dbReference type="SMR" id="C5BZT2"/>
<dbReference type="STRING" id="471853.Bcav_3017"/>
<dbReference type="KEGG" id="bcv:Bcav_3017"/>
<dbReference type="eggNOG" id="COG0045">
    <property type="taxonomic scope" value="Bacteria"/>
</dbReference>
<dbReference type="HOGENOM" id="CLU_037430_0_2_11"/>
<dbReference type="OrthoDB" id="9802602at2"/>
<dbReference type="UniPathway" id="UPA00223">
    <property type="reaction ID" value="UER00999"/>
</dbReference>
<dbReference type="Proteomes" id="UP000007962">
    <property type="component" value="Chromosome"/>
</dbReference>
<dbReference type="GO" id="GO:0005829">
    <property type="term" value="C:cytosol"/>
    <property type="evidence" value="ECO:0007669"/>
    <property type="project" value="TreeGrafter"/>
</dbReference>
<dbReference type="GO" id="GO:0042709">
    <property type="term" value="C:succinate-CoA ligase complex"/>
    <property type="evidence" value="ECO:0007669"/>
    <property type="project" value="TreeGrafter"/>
</dbReference>
<dbReference type="GO" id="GO:0005524">
    <property type="term" value="F:ATP binding"/>
    <property type="evidence" value="ECO:0007669"/>
    <property type="project" value="UniProtKB-UniRule"/>
</dbReference>
<dbReference type="GO" id="GO:0000287">
    <property type="term" value="F:magnesium ion binding"/>
    <property type="evidence" value="ECO:0007669"/>
    <property type="project" value="UniProtKB-UniRule"/>
</dbReference>
<dbReference type="GO" id="GO:0004775">
    <property type="term" value="F:succinate-CoA ligase (ADP-forming) activity"/>
    <property type="evidence" value="ECO:0007669"/>
    <property type="project" value="UniProtKB-UniRule"/>
</dbReference>
<dbReference type="GO" id="GO:0004776">
    <property type="term" value="F:succinate-CoA ligase (GDP-forming) activity"/>
    <property type="evidence" value="ECO:0007669"/>
    <property type="project" value="RHEA"/>
</dbReference>
<dbReference type="GO" id="GO:0006104">
    <property type="term" value="P:succinyl-CoA metabolic process"/>
    <property type="evidence" value="ECO:0007669"/>
    <property type="project" value="TreeGrafter"/>
</dbReference>
<dbReference type="GO" id="GO:0006099">
    <property type="term" value="P:tricarboxylic acid cycle"/>
    <property type="evidence" value="ECO:0007669"/>
    <property type="project" value="UniProtKB-UniRule"/>
</dbReference>
<dbReference type="FunFam" id="3.30.470.20:FF:000002">
    <property type="entry name" value="Succinate--CoA ligase [ADP-forming] subunit beta"/>
    <property type="match status" value="1"/>
</dbReference>
<dbReference type="FunFam" id="3.40.50.261:FF:000007">
    <property type="entry name" value="Succinate--CoA ligase [ADP-forming] subunit beta"/>
    <property type="match status" value="1"/>
</dbReference>
<dbReference type="Gene3D" id="3.30.1490.20">
    <property type="entry name" value="ATP-grasp fold, A domain"/>
    <property type="match status" value="1"/>
</dbReference>
<dbReference type="Gene3D" id="3.30.470.20">
    <property type="entry name" value="ATP-grasp fold, B domain"/>
    <property type="match status" value="1"/>
</dbReference>
<dbReference type="Gene3D" id="3.40.50.261">
    <property type="entry name" value="Succinyl-CoA synthetase domains"/>
    <property type="match status" value="1"/>
</dbReference>
<dbReference type="HAMAP" id="MF_00558">
    <property type="entry name" value="Succ_CoA_beta"/>
    <property type="match status" value="1"/>
</dbReference>
<dbReference type="InterPro" id="IPR011761">
    <property type="entry name" value="ATP-grasp"/>
</dbReference>
<dbReference type="InterPro" id="IPR013650">
    <property type="entry name" value="ATP-grasp_succ-CoA_synth-type"/>
</dbReference>
<dbReference type="InterPro" id="IPR013815">
    <property type="entry name" value="ATP_grasp_subdomain_1"/>
</dbReference>
<dbReference type="InterPro" id="IPR017866">
    <property type="entry name" value="Succ-CoA_synthase_bsu_CS"/>
</dbReference>
<dbReference type="InterPro" id="IPR005811">
    <property type="entry name" value="SUCC_ACL_C"/>
</dbReference>
<dbReference type="InterPro" id="IPR005809">
    <property type="entry name" value="Succ_CoA_ligase-like_bsu"/>
</dbReference>
<dbReference type="InterPro" id="IPR016102">
    <property type="entry name" value="Succinyl-CoA_synth-like"/>
</dbReference>
<dbReference type="NCBIfam" id="NF001913">
    <property type="entry name" value="PRK00696.1"/>
    <property type="match status" value="1"/>
</dbReference>
<dbReference type="NCBIfam" id="TIGR01016">
    <property type="entry name" value="sucCoAbeta"/>
    <property type="match status" value="1"/>
</dbReference>
<dbReference type="PANTHER" id="PTHR11815:SF10">
    <property type="entry name" value="SUCCINATE--COA LIGASE [GDP-FORMING] SUBUNIT BETA, MITOCHONDRIAL"/>
    <property type="match status" value="1"/>
</dbReference>
<dbReference type="PANTHER" id="PTHR11815">
    <property type="entry name" value="SUCCINYL-COA SYNTHETASE BETA CHAIN"/>
    <property type="match status" value="1"/>
</dbReference>
<dbReference type="Pfam" id="PF08442">
    <property type="entry name" value="ATP-grasp_2"/>
    <property type="match status" value="1"/>
</dbReference>
<dbReference type="Pfam" id="PF00549">
    <property type="entry name" value="Ligase_CoA"/>
    <property type="match status" value="1"/>
</dbReference>
<dbReference type="PIRSF" id="PIRSF001554">
    <property type="entry name" value="SucCS_beta"/>
    <property type="match status" value="1"/>
</dbReference>
<dbReference type="SUPFAM" id="SSF56059">
    <property type="entry name" value="Glutathione synthetase ATP-binding domain-like"/>
    <property type="match status" value="1"/>
</dbReference>
<dbReference type="SUPFAM" id="SSF52210">
    <property type="entry name" value="Succinyl-CoA synthetase domains"/>
    <property type="match status" value="1"/>
</dbReference>
<dbReference type="PROSITE" id="PS50975">
    <property type="entry name" value="ATP_GRASP"/>
    <property type="match status" value="1"/>
</dbReference>
<dbReference type="PROSITE" id="PS01217">
    <property type="entry name" value="SUCCINYL_COA_LIG_3"/>
    <property type="match status" value="1"/>
</dbReference>
<accession>C5BZT2</accession>
<comment type="function">
    <text evidence="1">Succinyl-CoA synthetase functions in the citric acid cycle (TCA), coupling the hydrolysis of succinyl-CoA to the synthesis of either ATP or GTP and thus represents the only step of substrate-level phosphorylation in the TCA. The beta subunit provides nucleotide specificity of the enzyme and binds the substrate succinate, while the binding sites for coenzyme A and phosphate are found in the alpha subunit.</text>
</comment>
<comment type="catalytic activity">
    <reaction evidence="1">
        <text>succinate + ATP + CoA = succinyl-CoA + ADP + phosphate</text>
        <dbReference type="Rhea" id="RHEA:17661"/>
        <dbReference type="ChEBI" id="CHEBI:30031"/>
        <dbReference type="ChEBI" id="CHEBI:30616"/>
        <dbReference type="ChEBI" id="CHEBI:43474"/>
        <dbReference type="ChEBI" id="CHEBI:57287"/>
        <dbReference type="ChEBI" id="CHEBI:57292"/>
        <dbReference type="ChEBI" id="CHEBI:456216"/>
        <dbReference type="EC" id="6.2.1.5"/>
    </reaction>
    <physiologicalReaction direction="right-to-left" evidence="1">
        <dbReference type="Rhea" id="RHEA:17663"/>
    </physiologicalReaction>
</comment>
<comment type="catalytic activity">
    <reaction evidence="1">
        <text>GTP + succinate + CoA = succinyl-CoA + GDP + phosphate</text>
        <dbReference type="Rhea" id="RHEA:22120"/>
        <dbReference type="ChEBI" id="CHEBI:30031"/>
        <dbReference type="ChEBI" id="CHEBI:37565"/>
        <dbReference type="ChEBI" id="CHEBI:43474"/>
        <dbReference type="ChEBI" id="CHEBI:57287"/>
        <dbReference type="ChEBI" id="CHEBI:57292"/>
        <dbReference type="ChEBI" id="CHEBI:58189"/>
    </reaction>
    <physiologicalReaction direction="right-to-left" evidence="1">
        <dbReference type="Rhea" id="RHEA:22122"/>
    </physiologicalReaction>
</comment>
<comment type="cofactor">
    <cofactor evidence="1">
        <name>Mg(2+)</name>
        <dbReference type="ChEBI" id="CHEBI:18420"/>
    </cofactor>
    <text evidence="1">Binds 1 Mg(2+) ion per subunit.</text>
</comment>
<comment type="pathway">
    <text evidence="1">Carbohydrate metabolism; tricarboxylic acid cycle; succinate from succinyl-CoA (ligase route): step 1/1.</text>
</comment>
<comment type="subunit">
    <text evidence="1">Heterotetramer of two alpha and two beta subunits.</text>
</comment>
<comment type="similarity">
    <text evidence="1">Belongs to the succinate/malate CoA ligase beta subunit family.</text>
</comment>
<protein>
    <recommendedName>
        <fullName evidence="1">Succinate--CoA ligase [ADP-forming] subunit beta</fullName>
        <ecNumber evidence="1">6.2.1.5</ecNumber>
    </recommendedName>
    <alternativeName>
        <fullName evidence="1">Succinyl-CoA synthetase subunit beta</fullName>
        <shortName evidence="1">SCS-beta</shortName>
    </alternativeName>
</protein>
<proteinExistence type="inferred from homology"/>
<organism>
    <name type="scientific">Beutenbergia cavernae (strain ATCC BAA-8 / DSM 12333 / CCUG 43141 / JCM 11478 / NBRC 16432 / NCIMB 13614 / HKI 0122)</name>
    <dbReference type="NCBI Taxonomy" id="471853"/>
    <lineage>
        <taxon>Bacteria</taxon>
        <taxon>Bacillati</taxon>
        <taxon>Actinomycetota</taxon>
        <taxon>Actinomycetes</taxon>
        <taxon>Micrococcales</taxon>
        <taxon>Beutenbergiaceae</taxon>
        <taxon>Beutenbergia</taxon>
    </lineage>
</organism>
<name>SUCC_BEUC1</name>
<feature type="chain" id="PRO_1000212018" description="Succinate--CoA ligase [ADP-forming] subunit beta">
    <location>
        <begin position="1"/>
        <end position="395"/>
    </location>
</feature>
<feature type="domain" description="ATP-grasp" evidence="1">
    <location>
        <begin position="9"/>
        <end position="240"/>
    </location>
</feature>
<feature type="binding site" evidence="1">
    <location>
        <position position="49"/>
    </location>
    <ligand>
        <name>ATP</name>
        <dbReference type="ChEBI" id="CHEBI:30616"/>
    </ligand>
</feature>
<feature type="binding site" evidence="1">
    <location>
        <begin position="56"/>
        <end position="58"/>
    </location>
    <ligand>
        <name>ATP</name>
        <dbReference type="ChEBI" id="CHEBI:30616"/>
    </ligand>
</feature>
<feature type="binding site" evidence="1">
    <location>
        <position position="98"/>
    </location>
    <ligand>
        <name>ATP</name>
        <dbReference type="ChEBI" id="CHEBI:30616"/>
    </ligand>
</feature>
<feature type="binding site" evidence="1">
    <location>
        <position position="103"/>
    </location>
    <ligand>
        <name>ATP</name>
        <dbReference type="ChEBI" id="CHEBI:30616"/>
    </ligand>
</feature>
<feature type="binding site" evidence="1">
    <location>
        <position position="195"/>
    </location>
    <ligand>
        <name>Mg(2+)</name>
        <dbReference type="ChEBI" id="CHEBI:18420"/>
    </ligand>
</feature>
<feature type="binding site" evidence="1">
    <location>
        <position position="209"/>
    </location>
    <ligand>
        <name>Mg(2+)</name>
        <dbReference type="ChEBI" id="CHEBI:18420"/>
    </ligand>
</feature>
<feature type="binding site" evidence="1">
    <location>
        <position position="260"/>
    </location>
    <ligand>
        <name>substrate</name>
        <note>ligand shared with subunit alpha</note>
    </ligand>
</feature>
<feature type="binding site" evidence="1">
    <location>
        <begin position="322"/>
        <end position="324"/>
    </location>
    <ligand>
        <name>substrate</name>
        <note>ligand shared with subunit alpha</note>
    </ligand>
</feature>
<keyword id="KW-0067">ATP-binding</keyword>
<keyword id="KW-0436">Ligase</keyword>
<keyword id="KW-0460">Magnesium</keyword>
<keyword id="KW-0479">Metal-binding</keyword>
<keyword id="KW-0547">Nucleotide-binding</keyword>
<keyword id="KW-1185">Reference proteome</keyword>
<keyword id="KW-0816">Tricarboxylic acid cycle</keyword>
<gene>
    <name evidence="1" type="primary">sucC</name>
    <name type="ordered locus">Bcav_3017</name>
</gene>